<reference key="1">
    <citation type="journal article" date="2002" name="Nature">
        <title>Complete genome sequence of the model actinomycete Streptomyces coelicolor A3(2).</title>
        <authorList>
            <person name="Bentley S.D."/>
            <person name="Chater K.F."/>
            <person name="Cerdeno-Tarraga A.-M."/>
            <person name="Challis G.L."/>
            <person name="Thomson N.R."/>
            <person name="James K.D."/>
            <person name="Harris D.E."/>
            <person name="Quail M.A."/>
            <person name="Kieser H."/>
            <person name="Harper D."/>
            <person name="Bateman A."/>
            <person name="Brown S."/>
            <person name="Chandra G."/>
            <person name="Chen C.W."/>
            <person name="Collins M."/>
            <person name="Cronin A."/>
            <person name="Fraser A."/>
            <person name="Goble A."/>
            <person name="Hidalgo J."/>
            <person name="Hornsby T."/>
            <person name="Howarth S."/>
            <person name="Huang C.-H."/>
            <person name="Kieser T."/>
            <person name="Larke L."/>
            <person name="Murphy L.D."/>
            <person name="Oliver K."/>
            <person name="O'Neil S."/>
            <person name="Rabbinowitsch E."/>
            <person name="Rajandream M.A."/>
            <person name="Rutherford K.M."/>
            <person name="Rutter S."/>
            <person name="Seeger K."/>
            <person name="Saunders D."/>
            <person name="Sharp S."/>
            <person name="Squares R."/>
            <person name="Squares S."/>
            <person name="Taylor K."/>
            <person name="Warren T."/>
            <person name="Wietzorrek A."/>
            <person name="Woodward J.R."/>
            <person name="Barrell B.G."/>
            <person name="Parkhill J."/>
            <person name="Hopwood D.A."/>
        </authorList>
    </citation>
    <scope>NUCLEOTIDE SEQUENCE [LARGE SCALE GENOMIC DNA]</scope>
    <source>
        <strain>ATCC BAA-471 / A3(2) / M145</strain>
    </source>
</reference>
<reference key="2">
    <citation type="journal article" date="2006" name="Mol. Microbiol.">
        <title>The sugar phosphotransferase system of Streptomyces coelicolor is regulated by the GntR-family regulator DasR and links N-acetylglucosamine metabolism to the control of development.</title>
        <authorList>
            <person name="Rigali S."/>
            <person name="Nothaft H."/>
            <person name="Noens E.E.E."/>
            <person name="Schlicht M."/>
            <person name="Colson S."/>
            <person name="Mueller M."/>
            <person name="Joris B."/>
            <person name="Koerten H.K."/>
            <person name="Hopwood D.A."/>
            <person name="Titgemeyer F."/>
            <person name="van Wezel G.P."/>
        </authorList>
    </citation>
    <scope>INDUCTION</scope>
    <source>
        <strain>ATCC BAA-471 / A3(2) / M145</strain>
    </source>
</reference>
<comment type="function">
    <text evidence="1">Catalyzes the reversible isomerization-deamination of glucosamine 6-phosphate (GlcN6P) to form fructose 6-phosphate (Fru6P) and ammonium ion.</text>
</comment>
<comment type="catalytic activity">
    <reaction evidence="1">
        <text>alpha-D-glucosamine 6-phosphate + H2O = beta-D-fructose 6-phosphate + NH4(+)</text>
        <dbReference type="Rhea" id="RHEA:12172"/>
        <dbReference type="ChEBI" id="CHEBI:15377"/>
        <dbReference type="ChEBI" id="CHEBI:28938"/>
        <dbReference type="ChEBI" id="CHEBI:57634"/>
        <dbReference type="ChEBI" id="CHEBI:75989"/>
        <dbReference type="EC" id="3.5.99.6"/>
    </reaction>
</comment>
<comment type="pathway">
    <text evidence="1">Amino-sugar metabolism; N-acetylneuraminate degradation; D-fructose 6-phosphate from N-acetylneuraminate: step 5/5.</text>
</comment>
<comment type="induction">
    <text evidence="2">Expression is repressed by DasR in the absence of GlcN6P.</text>
</comment>
<comment type="similarity">
    <text evidence="1">Belongs to the glucosamine/galactosamine-6-phosphate isomerase family. NagB subfamily.</text>
</comment>
<protein>
    <recommendedName>
        <fullName evidence="1">Glucosamine-6-phosphate deaminase</fullName>
        <ecNumber evidence="1">3.5.99.6</ecNumber>
    </recommendedName>
    <alternativeName>
        <fullName evidence="1">GlcN6P deaminase</fullName>
        <shortName evidence="1">GNPDA</shortName>
    </alternativeName>
    <alternativeName>
        <fullName evidence="1">Glucosamine-6-phosphate isomerase</fullName>
    </alternativeName>
</protein>
<accession>Q9K487</accession>
<organism>
    <name type="scientific">Streptomyces coelicolor (strain ATCC BAA-471 / A3(2) / M145)</name>
    <dbReference type="NCBI Taxonomy" id="100226"/>
    <lineage>
        <taxon>Bacteria</taxon>
        <taxon>Bacillati</taxon>
        <taxon>Actinomycetota</taxon>
        <taxon>Actinomycetes</taxon>
        <taxon>Kitasatosporales</taxon>
        <taxon>Streptomycetaceae</taxon>
        <taxon>Streptomyces</taxon>
        <taxon>Streptomyces albidoflavus group</taxon>
    </lineage>
</organism>
<keyword id="KW-0119">Carbohydrate metabolism</keyword>
<keyword id="KW-0378">Hydrolase</keyword>
<keyword id="KW-1185">Reference proteome</keyword>
<sequence length="261" mass="27446">MEVVIVPDAKAGGELIAEAMAQLLRRKPDALLGVATGSTPLPVYEALAAKVRSGAVDTAQARIAQLDEYVGLPAEHPESYRSVLRREVLEPLGIDMDAFMGPDGTAADVQAACEAYDTALGGSGGVDLQLLGIGTDGHIGFNEPCSSLASRTRIKTLTEQTRIDNARFFDGDIEQVPHHVITQGIGTILEARHVVLLATGEGKADAVAASVEGPVAAVCPASALQLHPHATVVVDEAAASKLKLADYFRHTYAHKPDWQGI</sequence>
<proteinExistence type="evidence at transcript level"/>
<feature type="chain" id="PRO_0000160175" description="Glucosamine-6-phosphate deaminase">
    <location>
        <begin position="1"/>
        <end position="261"/>
    </location>
</feature>
<feature type="active site" description="Proton acceptor; for enolization step" evidence="1">
    <location>
        <position position="67"/>
    </location>
</feature>
<feature type="active site" description="For ring-opening step" evidence="1">
    <location>
        <position position="136"/>
    </location>
</feature>
<feature type="active site" description="Proton acceptor; for ring-opening step" evidence="1">
    <location>
        <position position="138"/>
    </location>
</feature>
<feature type="active site" description="For ring-opening step" evidence="1">
    <location>
        <position position="143"/>
    </location>
</feature>
<name>NAGB_STRCO</name>
<evidence type="ECO:0000255" key="1">
    <source>
        <dbReference type="HAMAP-Rule" id="MF_01241"/>
    </source>
</evidence>
<evidence type="ECO:0000269" key="2">
    <source>
    </source>
</evidence>
<dbReference type="EC" id="3.5.99.6" evidence="1"/>
<dbReference type="EMBL" id="AL939123">
    <property type="protein sequence ID" value="CAB94621.1"/>
    <property type="molecule type" value="Genomic_DNA"/>
</dbReference>
<dbReference type="RefSeq" id="NP_629383.1">
    <property type="nucleotide sequence ID" value="NC_003888.3"/>
</dbReference>
<dbReference type="RefSeq" id="WP_011030128.1">
    <property type="nucleotide sequence ID" value="NZ_VNID01000008.1"/>
</dbReference>
<dbReference type="SMR" id="Q9K487"/>
<dbReference type="STRING" id="100226.gene:17762887"/>
<dbReference type="PaxDb" id="100226-SCO5236"/>
<dbReference type="KEGG" id="sco:SCO5236"/>
<dbReference type="PATRIC" id="fig|100226.15.peg.5319"/>
<dbReference type="eggNOG" id="COG0363">
    <property type="taxonomic scope" value="Bacteria"/>
</dbReference>
<dbReference type="HOGENOM" id="CLU_049611_0_1_11"/>
<dbReference type="InParanoid" id="Q9K487"/>
<dbReference type="OrthoDB" id="9791139at2"/>
<dbReference type="PhylomeDB" id="Q9K487"/>
<dbReference type="UniPathway" id="UPA00629">
    <property type="reaction ID" value="UER00684"/>
</dbReference>
<dbReference type="Proteomes" id="UP000001973">
    <property type="component" value="Chromosome"/>
</dbReference>
<dbReference type="GO" id="GO:0005737">
    <property type="term" value="C:cytoplasm"/>
    <property type="evidence" value="ECO:0000318"/>
    <property type="project" value="GO_Central"/>
</dbReference>
<dbReference type="GO" id="GO:0004342">
    <property type="term" value="F:glucosamine-6-phosphate deaminase activity"/>
    <property type="evidence" value="ECO:0000318"/>
    <property type="project" value="GO_Central"/>
</dbReference>
<dbReference type="GO" id="GO:0042802">
    <property type="term" value="F:identical protein binding"/>
    <property type="evidence" value="ECO:0000318"/>
    <property type="project" value="GO_Central"/>
</dbReference>
<dbReference type="GO" id="GO:0005975">
    <property type="term" value="P:carbohydrate metabolic process"/>
    <property type="evidence" value="ECO:0007669"/>
    <property type="project" value="InterPro"/>
</dbReference>
<dbReference type="GO" id="GO:0006043">
    <property type="term" value="P:glucosamine catabolic process"/>
    <property type="evidence" value="ECO:0000318"/>
    <property type="project" value="GO_Central"/>
</dbReference>
<dbReference type="GO" id="GO:0006046">
    <property type="term" value="P:N-acetylglucosamine catabolic process"/>
    <property type="evidence" value="ECO:0000318"/>
    <property type="project" value="GO_Central"/>
</dbReference>
<dbReference type="GO" id="GO:0019262">
    <property type="term" value="P:N-acetylneuraminate catabolic process"/>
    <property type="evidence" value="ECO:0000318"/>
    <property type="project" value="GO_Central"/>
</dbReference>
<dbReference type="CDD" id="cd01399">
    <property type="entry name" value="GlcN6P_deaminase"/>
    <property type="match status" value="1"/>
</dbReference>
<dbReference type="FunFam" id="3.40.50.1360:FF:000003">
    <property type="entry name" value="Glucosamine-6-phosphate deaminase"/>
    <property type="match status" value="1"/>
</dbReference>
<dbReference type="Gene3D" id="3.40.50.1360">
    <property type="match status" value="1"/>
</dbReference>
<dbReference type="HAMAP" id="MF_01241">
    <property type="entry name" value="GlcN6P_deamin"/>
    <property type="match status" value="1"/>
</dbReference>
<dbReference type="InterPro" id="IPR006148">
    <property type="entry name" value="Glc/Gal-6P_isomerase"/>
</dbReference>
<dbReference type="InterPro" id="IPR004547">
    <property type="entry name" value="Glucosamine6P_isomerase"/>
</dbReference>
<dbReference type="InterPro" id="IPR018321">
    <property type="entry name" value="Glucosamine6P_isomerase_CS"/>
</dbReference>
<dbReference type="InterPro" id="IPR037171">
    <property type="entry name" value="NagB/RpiA_transferase-like"/>
</dbReference>
<dbReference type="NCBIfam" id="TIGR00502">
    <property type="entry name" value="nagB"/>
    <property type="match status" value="1"/>
</dbReference>
<dbReference type="NCBIfam" id="NF001684">
    <property type="entry name" value="PRK00443.1-4"/>
    <property type="match status" value="1"/>
</dbReference>
<dbReference type="PANTHER" id="PTHR11280">
    <property type="entry name" value="GLUCOSAMINE-6-PHOSPHATE ISOMERASE"/>
    <property type="match status" value="1"/>
</dbReference>
<dbReference type="PANTHER" id="PTHR11280:SF5">
    <property type="entry name" value="GLUCOSAMINE-6-PHOSPHATE ISOMERASE"/>
    <property type="match status" value="1"/>
</dbReference>
<dbReference type="Pfam" id="PF01182">
    <property type="entry name" value="Glucosamine_iso"/>
    <property type="match status" value="1"/>
</dbReference>
<dbReference type="SUPFAM" id="SSF100950">
    <property type="entry name" value="NagB/RpiA/CoA transferase-like"/>
    <property type="match status" value="1"/>
</dbReference>
<dbReference type="PROSITE" id="PS01161">
    <property type="entry name" value="GLC_GALNAC_ISOMERASE"/>
    <property type="match status" value="1"/>
</dbReference>
<gene>
    <name evidence="1" type="primary">nagB</name>
    <name type="ordered locus">SCO5236</name>
    <name type="ORF">SC7E4.33c</name>
</gene>